<proteinExistence type="inferred from homology"/>
<dbReference type="EC" id="2.5.1.78" evidence="1"/>
<dbReference type="EMBL" id="CP000660">
    <property type="protein sequence ID" value="ABP51271.1"/>
    <property type="molecule type" value="Genomic_DNA"/>
</dbReference>
<dbReference type="SMR" id="A4WLK4"/>
<dbReference type="STRING" id="340102.Pars_1720"/>
<dbReference type="KEGG" id="pas:Pars_1720"/>
<dbReference type="HOGENOM" id="CLU_089358_3_1_2"/>
<dbReference type="OrthoDB" id="7610at2157"/>
<dbReference type="PhylomeDB" id="A4WLK4"/>
<dbReference type="UniPathway" id="UPA00275">
    <property type="reaction ID" value="UER00404"/>
</dbReference>
<dbReference type="Proteomes" id="UP000001567">
    <property type="component" value="Chromosome"/>
</dbReference>
<dbReference type="GO" id="GO:0009349">
    <property type="term" value="C:riboflavin synthase complex"/>
    <property type="evidence" value="ECO:0007669"/>
    <property type="project" value="InterPro"/>
</dbReference>
<dbReference type="GO" id="GO:0000906">
    <property type="term" value="F:6,7-dimethyl-8-ribityllumazine synthase activity"/>
    <property type="evidence" value="ECO:0007669"/>
    <property type="project" value="UniProtKB-UniRule"/>
</dbReference>
<dbReference type="GO" id="GO:0009231">
    <property type="term" value="P:riboflavin biosynthetic process"/>
    <property type="evidence" value="ECO:0007669"/>
    <property type="project" value="UniProtKB-UniRule"/>
</dbReference>
<dbReference type="CDD" id="cd09211">
    <property type="entry name" value="Lumazine_synthase_archaeal"/>
    <property type="match status" value="1"/>
</dbReference>
<dbReference type="FunFam" id="3.40.50.960:FF:000003">
    <property type="entry name" value="6,7-dimethyl-8-ribityllumazine synthase"/>
    <property type="match status" value="1"/>
</dbReference>
<dbReference type="Gene3D" id="3.40.50.960">
    <property type="entry name" value="Lumazine/riboflavin synthase"/>
    <property type="match status" value="1"/>
</dbReference>
<dbReference type="HAMAP" id="MF_00178">
    <property type="entry name" value="Lumazine_synth"/>
    <property type="match status" value="1"/>
</dbReference>
<dbReference type="InterPro" id="IPR034964">
    <property type="entry name" value="LS"/>
</dbReference>
<dbReference type="InterPro" id="IPR002180">
    <property type="entry name" value="LS/RS"/>
</dbReference>
<dbReference type="InterPro" id="IPR036467">
    <property type="entry name" value="LS/RS_sf"/>
</dbReference>
<dbReference type="NCBIfam" id="TIGR00114">
    <property type="entry name" value="lumazine-synth"/>
    <property type="match status" value="1"/>
</dbReference>
<dbReference type="PANTHER" id="PTHR21058:SF0">
    <property type="entry name" value="6,7-DIMETHYL-8-RIBITYLLUMAZINE SYNTHASE"/>
    <property type="match status" value="1"/>
</dbReference>
<dbReference type="PANTHER" id="PTHR21058">
    <property type="entry name" value="6,7-DIMETHYL-8-RIBITYLLUMAZINE SYNTHASE DMRL SYNTHASE LUMAZINE SYNTHASE"/>
    <property type="match status" value="1"/>
</dbReference>
<dbReference type="Pfam" id="PF00885">
    <property type="entry name" value="DMRL_synthase"/>
    <property type="match status" value="1"/>
</dbReference>
<dbReference type="SUPFAM" id="SSF52121">
    <property type="entry name" value="Lumazine synthase"/>
    <property type="match status" value="1"/>
</dbReference>
<gene>
    <name evidence="1" type="primary">ribH</name>
    <name type="ordered locus">Pars_1720</name>
</gene>
<accession>A4WLK4</accession>
<evidence type="ECO:0000255" key="1">
    <source>
        <dbReference type="HAMAP-Rule" id="MF_00178"/>
    </source>
</evidence>
<reference key="1">
    <citation type="submission" date="2007-04" db="EMBL/GenBank/DDBJ databases">
        <title>Complete sequence of Pyrobaculum arsenaticum DSM 13514.</title>
        <authorList>
            <consortium name="US DOE Joint Genome Institute"/>
            <person name="Copeland A."/>
            <person name="Lucas S."/>
            <person name="Lapidus A."/>
            <person name="Barry K."/>
            <person name="Glavina del Rio T."/>
            <person name="Dalin E."/>
            <person name="Tice H."/>
            <person name="Pitluck S."/>
            <person name="Chain P."/>
            <person name="Malfatti S."/>
            <person name="Shin M."/>
            <person name="Vergez L."/>
            <person name="Schmutz J."/>
            <person name="Larimer F."/>
            <person name="Land M."/>
            <person name="Hauser L."/>
            <person name="Kyrpides N."/>
            <person name="Mikhailova N."/>
            <person name="Cozen A.E."/>
            <person name="Fitz-Gibbon S.T."/>
            <person name="House C.H."/>
            <person name="Saltikov C."/>
            <person name="Lowe T.M."/>
            <person name="Richardson P."/>
        </authorList>
    </citation>
    <scope>NUCLEOTIDE SEQUENCE [LARGE SCALE GENOMIC DNA]</scope>
    <source>
        <strain>ATCC 700994 / DSM 13514 / JCM 11321 / PZ6</strain>
    </source>
</reference>
<feature type="chain" id="PRO_1000040494" description="6,7-dimethyl-8-ribityllumazine synthase">
    <location>
        <begin position="1"/>
        <end position="150"/>
    </location>
</feature>
<feature type="active site" description="Proton donor" evidence="1">
    <location>
        <position position="75"/>
    </location>
</feature>
<feature type="binding site" evidence="1">
    <location>
        <position position="11"/>
    </location>
    <ligand>
        <name>5-amino-6-(D-ribitylamino)uracil</name>
        <dbReference type="ChEBI" id="CHEBI:15934"/>
    </ligand>
</feature>
<feature type="binding site" evidence="1">
    <location>
        <begin position="43"/>
        <end position="45"/>
    </location>
    <ligand>
        <name>5-amino-6-(D-ribitylamino)uracil</name>
        <dbReference type="ChEBI" id="CHEBI:15934"/>
    </ligand>
</feature>
<feature type="binding site" evidence="1">
    <location>
        <begin position="67"/>
        <end position="69"/>
    </location>
    <ligand>
        <name>5-amino-6-(D-ribitylamino)uracil</name>
        <dbReference type="ChEBI" id="CHEBI:15934"/>
    </ligand>
</feature>
<feature type="binding site" evidence="1">
    <location>
        <begin position="72"/>
        <end position="73"/>
    </location>
    <ligand>
        <name>(2S)-2-hydroxy-3-oxobutyl phosphate</name>
        <dbReference type="ChEBI" id="CHEBI:58830"/>
    </ligand>
</feature>
<feature type="binding site" evidence="1">
    <location>
        <position position="100"/>
    </location>
    <ligand>
        <name>5-amino-6-(D-ribitylamino)uracil</name>
        <dbReference type="ChEBI" id="CHEBI:15934"/>
    </ligand>
</feature>
<feature type="binding site" evidence="1">
    <location>
        <position position="115"/>
    </location>
    <ligand>
        <name>(2S)-2-hydroxy-3-oxobutyl phosphate</name>
        <dbReference type="ChEBI" id="CHEBI:58830"/>
    </ligand>
</feature>
<protein>
    <recommendedName>
        <fullName evidence="1">6,7-dimethyl-8-ribityllumazine synthase</fullName>
        <shortName evidence="1">DMRL synthase</shortName>
        <shortName evidence="1">LS</shortName>
        <shortName evidence="1">Lumazine synthase</shortName>
        <ecNumber evidence="1">2.5.1.78</ecNumber>
    </recommendedName>
</protein>
<comment type="function">
    <text evidence="1">Catalyzes the formation of 6,7-dimethyl-8-ribityllumazine by condensation of 5-amino-6-(D-ribitylamino)uracil with 3,4-dihydroxy-2-butanone 4-phosphate. This is the penultimate step in the biosynthesis of riboflavin.</text>
</comment>
<comment type="catalytic activity">
    <reaction evidence="1">
        <text>(2S)-2-hydroxy-3-oxobutyl phosphate + 5-amino-6-(D-ribitylamino)uracil = 6,7-dimethyl-8-(1-D-ribityl)lumazine + phosphate + 2 H2O + H(+)</text>
        <dbReference type="Rhea" id="RHEA:26152"/>
        <dbReference type="ChEBI" id="CHEBI:15377"/>
        <dbReference type="ChEBI" id="CHEBI:15378"/>
        <dbReference type="ChEBI" id="CHEBI:15934"/>
        <dbReference type="ChEBI" id="CHEBI:43474"/>
        <dbReference type="ChEBI" id="CHEBI:58201"/>
        <dbReference type="ChEBI" id="CHEBI:58830"/>
        <dbReference type="EC" id="2.5.1.78"/>
    </reaction>
</comment>
<comment type="pathway">
    <text evidence="1">Cofactor biosynthesis; riboflavin biosynthesis; riboflavin from 2-hydroxy-3-oxobutyl phosphate and 5-amino-6-(D-ribitylamino)uracil: step 1/2.</text>
</comment>
<comment type="similarity">
    <text evidence="1">Belongs to the DMRL synthase family.</text>
</comment>
<keyword id="KW-0686">Riboflavin biosynthesis</keyword>
<keyword id="KW-0808">Transferase</keyword>
<name>RISB_PYRAR</name>
<sequence>MVRIAVVVSEFNYDVTQLMLQKALEHAKFLGAEVTYVVKVPGVYDIPTLLRDLVAKEEVDAVVTLGAVIQGATKHDEVVAHQAARKILDISVESGKPITLGIIGPGANRMQALERVEEYAKRAVEAAVKLARRKKTLREAKYAGSTVFID</sequence>
<organism>
    <name type="scientific">Pyrobaculum arsenaticum (strain DSM 13514 / JCM 11321 / PZ6)</name>
    <dbReference type="NCBI Taxonomy" id="340102"/>
    <lineage>
        <taxon>Archaea</taxon>
        <taxon>Thermoproteota</taxon>
        <taxon>Thermoprotei</taxon>
        <taxon>Thermoproteales</taxon>
        <taxon>Thermoproteaceae</taxon>
        <taxon>Pyrobaculum</taxon>
    </lineage>
</organism>